<protein>
    <recommendedName>
        <fullName evidence="12">Dual specificity protein phosphatase 7</fullName>
        <ecNumber evidence="8">3.1.3.16</ecNumber>
        <ecNumber evidence="8">3.1.3.48</ecNumber>
    </recommendedName>
    <alternativeName>
        <fullName evidence="10">Dual specificity protein phosphatase PYST2</fullName>
    </alternativeName>
</protein>
<evidence type="ECO:0000250" key="1">
    <source>
        <dbReference type="UniProtKB" id="Q91Z46"/>
    </source>
</evidence>
<evidence type="ECO:0000255" key="2">
    <source>
        <dbReference type="PROSITE-ProRule" id="PRU00160"/>
    </source>
</evidence>
<evidence type="ECO:0000255" key="3">
    <source>
        <dbReference type="PROSITE-ProRule" id="PRU00173"/>
    </source>
</evidence>
<evidence type="ECO:0000256" key="4">
    <source>
        <dbReference type="SAM" id="MobiDB-lite"/>
    </source>
</evidence>
<evidence type="ECO:0000269" key="5">
    <source>
    </source>
</evidence>
<evidence type="ECO:0000269" key="6">
    <source>
    </source>
</evidence>
<evidence type="ECO:0000269" key="7">
    <source>
    </source>
</evidence>
<evidence type="ECO:0000269" key="8">
    <source>
    </source>
</evidence>
<evidence type="ECO:0000303" key="9">
    <source>
    </source>
</evidence>
<evidence type="ECO:0000303" key="10">
    <source>
    </source>
</evidence>
<evidence type="ECO:0000305" key="11"/>
<evidence type="ECO:0000312" key="12">
    <source>
        <dbReference type="HGNC" id="HGNC:3073"/>
    </source>
</evidence>
<evidence type="ECO:0007744" key="13">
    <source>
        <dbReference type="PDB" id="4Y2E"/>
    </source>
</evidence>
<evidence type="ECO:0007829" key="14">
    <source>
        <dbReference type="PDB" id="4Y2E"/>
    </source>
</evidence>
<name>DUS7_HUMAN</name>
<comment type="function">
    <text evidence="1 8">Dual specificity protein phosphatase (PubMed:9788880). Shows high activity towards MAPK1/ERK2 (PubMed:9788880). Also has lower activity towards MAPK14 and MAPK8 (PubMed:9788880). In arrested oocytes, plays a role in meiotic resumption (By similarity). Promotes nuclear envelope breakdown and activation of the CDK1/Cyclin-B complex in oocytes, probably by dephosphorylating and inactivating the conventional protein kinase C (cPKC) isozyme PRKCB (By similarity). May also inactivate PRKCA and/or PRKCG (By similarity). Also important in oocytes for normal chromosome alignment on the metaphase plate and progression to anaphase, where it might regulate activity of the spindle-assembly checkpoint (SAC) complex (By similarity).</text>
</comment>
<comment type="catalytic activity">
    <reaction evidence="8">
        <text>O-phospho-L-tyrosyl-[protein] + H2O = L-tyrosyl-[protein] + phosphate</text>
        <dbReference type="Rhea" id="RHEA:10684"/>
        <dbReference type="Rhea" id="RHEA-COMP:10136"/>
        <dbReference type="Rhea" id="RHEA-COMP:20101"/>
        <dbReference type="ChEBI" id="CHEBI:15377"/>
        <dbReference type="ChEBI" id="CHEBI:43474"/>
        <dbReference type="ChEBI" id="CHEBI:46858"/>
        <dbReference type="ChEBI" id="CHEBI:61978"/>
        <dbReference type="EC" id="3.1.3.48"/>
    </reaction>
</comment>
<comment type="catalytic activity">
    <reaction evidence="8">
        <text>O-phospho-L-seryl-[protein] + H2O = L-seryl-[protein] + phosphate</text>
        <dbReference type="Rhea" id="RHEA:20629"/>
        <dbReference type="Rhea" id="RHEA-COMP:9863"/>
        <dbReference type="Rhea" id="RHEA-COMP:11604"/>
        <dbReference type="ChEBI" id="CHEBI:15377"/>
        <dbReference type="ChEBI" id="CHEBI:29999"/>
        <dbReference type="ChEBI" id="CHEBI:43474"/>
        <dbReference type="ChEBI" id="CHEBI:83421"/>
        <dbReference type="EC" id="3.1.3.16"/>
    </reaction>
</comment>
<comment type="catalytic activity">
    <reaction evidence="8">
        <text>O-phospho-L-threonyl-[protein] + H2O = L-threonyl-[protein] + phosphate</text>
        <dbReference type="Rhea" id="RHEA:47004"/>
        <dbReference type="Rhea" id="RHEA-COMP:11060"/>
        <dbReference type="Rhea" id="RHEA-COMP:11605"/>
        <dbReference type="ChEBI" id="CHEBI:15377"/>
        <dbReference type="ChEBI" id="CHEBI:30013"/>
        <dbReference type="ChEBI" id="CHEBI:43474"/>
        <dbReference type="ChEBI" id="CHEBI:61977"/>
        <dbReference type="EC" id="3.1.3.16"/>
    </reaction>
</comment>
<comment type="activity regulation">
    <text evidence="8">Strongly inhibited by sodium orthovanadate.</text>
</comment>
<comment type="biophysicochemical properties">
    <kinetics>
        <KM evidence="8">6.82 mM for p-nitrophenyl phosphate</KM>
        <KM evidence="8">0.76 mM for p-nitrophenyl phosphate (in the presence of MAPK1)</KM>
    </kinetics>
</comment>
<comment type="subunit">
    <text evidence="8">Interacts with MAPK1/ERK2; the interaction enhances DUSP7 phosphatase activity.</text>
</comment>
<comment type="interaction">
    <interactant intactId="EBI-1265847">
        <id>Q16829</id>
    </interactant>
    <interactant intactId="EBI-1175354">
        <id>Q9H6Z9</id>
        <label>EGLN3</label>
    </interactant>
    <organismsDiffer>false</organismsDiffer>
    <experiments>3</experiments>
</comment>
<comment type="interaction">
    <interactant intactId="EBI-1265847">
        <id>Q16829</id>
    </interactant>
    <interactant intactId="EBI-286316">
        <id>P10912</id>
        <label>GHR</label>
    </interactant>
    <organismsDiffer>false</organismsDiffer>
    <experiments>2</experiments>
</comment>
<comment type="interaction">
    <interactant intactId="EBI-1265847">
        <id>Q16829</id>
    </interactant>
    <interactant intactId="EBI-17178971">
        <id>Q14005-2</id>
        <label>IL16</label>
    </interactant>
    <organismsDiffer>false</organismsDiffer>
    <experiments>3</experiments>
</comment>
<comment type="interaction">
    <interactant intactId="EBI-1265847">
        <id>Q16829</id>
    </interactant>
    <interactant intactId="EBI-959949">
        <id>P28482</id>
        <label>MAPK1</label>
    </interactant>
    <organismsDiffer>false</organismsDiffer>
    <experiments>2</experiments>
</comment>
<comment type="interaction">
    <interactant intactId="EBI-1265847">
        <id>Q16829</id>
    </interactant>
    <interactant intactId="EBI-73946">
        <id>Q16539</id>
        <label>MAPK14</label>
    </interactant>
    <organismsDiffer>false</organismsDiffer>
    <experiments>2</experiments>
</comment>
<comment type="interaction">
    <interactant intactId="EBI-1265847">
        <id>Q16829</id>
    </interactant>
    <interactant intactId="EBI-743549">
        <id>O43791</id>
        <label>SPOP</label>
    </interactant>
    <organismsDiffer>false</organismsDiffer>
    <experiments>5</experiments>
</comment>
<comment type="subcellular location">
    <subcellularLocation>
        <location evidence="8">Cytoplasm</location>
    </subcellularLocation>
</comment>
<comment type="alternative products">
    <event type="alternative promoter"/>
    <isoform>
        <id>Q16829-1</id>
        <name>1</name>
        <name>PYST2-L</name>
        <sequence type="displayed"/>
    </isoform>
    <isoform>
        <id>Q16829-2</id>
        <name>2</name>
        <name>PYST2-S</name>
        <sequence type="described" ref="VSP_012822"/>
    </isoform>
</comment>
<comment type="tissue specificity">
    <text evidence="5 7">Strongly expressed in liver (PubMed:8670865). Expressed at significantly higher levels in malignant hematopoietic cells than in corresponding non-malignant cells (PubMed:14576828).</text>
</comment>
<comment type="similarity">
    <text evidence="11">Belongs to the protein-tyrosine phosphatase family. Non-receptor class dual specificity subfamily.</text>
</comment>
<comment type="caution">
    <text evidence="11">An out-of-frame translation product, PYST2SB, has been experimentally demonstrated to be formed from the alternative promoter. The expression of the in-frame product has not yet been shown.</text>
</comment>
<sequence length="419" mass="44957">MKNQLRGPPARAHMSTSGAAAAGGTRAGSEPGAGSGSGAGTGAGAATGAGAMPCKSAEWLQEELEARGGASLLLLDCRPHELFESSHIETAINLAIPGLMLRRLRKGNLPIRSIIPNHADKERFATRCKAATVLLYDEATAEWQPEPGAPASVLGLLLQKLRDDGCQAYYLQGGFNKFQTEYSEHCETNVDSSSSPSSSPPTSVLGLGGLRISSDCSDGESDRELPSSATESDGSPVPSSQPAFPVQILPYLYLGCAKDSTNLDVLGKYGIKYILNVTPNLPNAFEHGGEFTYKQIPISDHWSQNLSQFFPEAISFIDEARSKKCGVLVHCLAGISRSVTVTVAYLMQKMNLSLNDAYDFVKRKKSNISPNFNFMGQLLDFERTLGLSSPCDNHASSEQLYFSTPTNHNLFPLNTLEST</sequence>
<feature type="chain" id="PRO_0000094807" description="Dual specificity protein phosphatase 7">
    <location>
        <begin position="1"/>
        <end position="419"/>
    </location>
</feature>
<feature type="domain" description="Rhodanese" evidence="3">
    <location>
        <begin position="68"/>
        <end position="187"/>
    </location>
</feature>
<feature type="domain" description="Tyrosine-protein phosphatase" evidence="2">
    <location>
        <begin position="244"/>
        <end position="387"/>
    </location>
</feature>
<feature type="region of interest" description="Disordered" evidence="4">
    <location>
        <begin position="1"/>
        <end position="47"/>
    </location>
</feature>
<feature type="region of interest" description="Disordered" evidence="4">
    <location>
        <begin position="216"/>
        <end position="240"/>
    </location>
</feature>
<feature type="compositionally biased region" description="Low complexity" evidence="4">
    <location>
        <begin position="10"/>
        <end position="29"/>
    </location>
</feature>
<feature type="compositionally biased region" description="Gly residues" evidence="4">
    <location>
        <begin position="31"/>
        <end position="47"/>
    </location>
</feature>
<feature type="compositionally biased region" description="Polar residues" evidence="4">
    <location>
        <begin position="227"/>
        <end position="240"/>
    </location>
</feature>
<feature type="active site" description="Phosphocysteine intermediate" evidence="2">
    <location>
        <position position="331"/>
    </location>
</feature>
<feature type="binding site" evidence="6 13">
    <location>
        <begin position="331"/>
        <end position="337"/>
    </location>
    <ligand>
        <name>substrate</name>
    </ligand>
</feature>
<feature type="splice variant" id="VSP_012822" description="In isoform 2." evidence="9">
    <location>
        <begin position="1"/>
        <end position="51"/>
    </location>
</feature>
<feature type="sequence variant" id="VAR_051752" description="In dbSNP:rs34821455.">
    <original>S</original>
    <variation>N</variation>
    <location>
        <position position="235"/>
    </location>
</feature>
<feature type="sequence conflict" description="In Ref. 1; no nucleotide entry." evidence="11" ref="1">
    <original>HIET</original>
    <variation>THRD</variation>
    <location>
        <begin position="87"/>
        <end position="90"/>
    </location>
</feature>
<feature type="strand" evidence="14">
    <location>
        <begin position="246"/>
        <end position="249"/>
    </location>
</feature>
<feature type="strand" evidence="14">
    <location>
        <begin position="252"/>
        <end position="255"/>
    </location>
</feature>
<feature type="helix" evidence="14">
    <location>
        <begin position="257"/>
        <end position="260"/>
    </location>
</feature>
<feature type="helix" evidence="14">
    <location>
        <begin position="263"/>
        <end position="268"/>
    </location>
</feature>
<feature type="strand" evidence="14">
    <location>
        <begin position="271"/>
        <end position="276"/>
    </location>
</feature>
<feature type="strand" evidence="14">
    <location>
        <begin position="279"/>
        <end position="281"/>
    </location>
</feature>
<feature type="strand" evidence="14">
    <location>
        <begin position="287"/>
        <end position="290"/>
    </location>
</feature>
<feature type="strand" evidence="14">
    <location>
        <begin position="292"/>
        <end position="295"/>
    </location>
</feature>
<feature type="helix" evidence="14">
    <location>
        <begin position="307"/>
        <end position="309"/>
    </location>
</feature>
<feature type="helix" evidence="14">
    <location>
        <begin position="310"/>
        <end position="322"/>
    </location>
</feature>
<feature type="strand" evidence="14">
    <location>
        <begin position="326"/>
        <end position="330"/>
    </location>
</feature>
<feature type="strand" evidence="14">
    <location>
        <begin position="332"/>
        <end position="336"/>
    </location>
</feature>
<feature type="helix" evidence="14">
    <location>
        <begin position="337"/>
        <end position="349"/>
    </location>
</feature>
<feature type="helix" evidence="14">
    <location>
        <begin position="354"/>
        <end position="364"/>
    </location>
</feature>
<feature type="helix" evidence="14">
    <location>
        <begin position="372"/>
        <end position="385"/>
    </location>
</feature>
<keyword id="KW-0002">3D-structure</keyword>
<keyword id="KW-0877">Alternative promoter usage</keyword>
<keyword id="KW-0963">Cytoplasm</keyword>
<keyword id="KW-0378">Hydrolase</keyword>
<keyword id="KW-0904">Protein phosphatase</keyword>
<keyword id="KW-1267">Proteomics identification</keyword>
<keyword id="KW-1185">Reference proteome</keyword>
<accession>Q16829</accession>
<accession>Q2M3J7</accession>
<accession>Q8NFJ0</accession>
<organism>
    <name type="scientific">Homo sapiens</name>
    <name type="common">Human</name>
    <dbReference type="NCBI Taxonomy" id="9606"/>
    <lineage>
        <taxon>Eukaryota</taxon>
        <taxon>Metazoa</taxon>
        <taxon>Chordata</taxon>
        <taxon>Craniata</taxon>
        <taxon>Vertebrata</taxon>
        <taxon>Euteleostomi</taxon>
        <taxon>Mammalia</taxon>
        <taxon>Eutheria</taxon>
        <taxon>Euarchontoglires</taxon>
        <taxon>Primates</taxon>
        <taxon>Haplorrhini</taxon>
        <taxon>Catarrhini</taxon>
        <taxon>Hominidae</taxon>
        <taxon>Homo</taxon>
    </lineage>
</organism>
<proteinExistence type="evidence at protein level"/>
<gene>
    <name evidence="12" type="primary">DUSP7</name>
    <name evidence="10" type="synonym">PYST2</name>
</gene>
<reference key="1">
    <citation type="journal article" date="1998" name="J. Cell Sci.">
        <title>Isolation of the human genes encoding the Pyst1 and Pyst2 phosphatases: characterisation of Pyst2 as a cytosolic dual-specificity MAP kinase phosphatase and its catalytic activation by both MAP and SAP kinases.</title>
        <authorList>
            <person name="Dowd S."/>
            <person name="Sneddon A.A."/>
            <person name="Keyse S.M."/>
        </authorList>
    </citation>
    <scope>NUCLEOTIDE SEQUENCE [MRNA] (ISOFORM 2)</scope>
    <scope>FUNCTION</scope>
    <scope>CATALYTIC ACTIVITY</scope>
    <scope>ACTIVITY REGULATION</scope>
    <scope>BIOPHYSICOCHEMICAL PROPERTIES</scope>
    <scope>INTERACTION WITH MAPK1</scope>
    <scope>SUBCELLULAR LOCATION</scope>
</reference>
<reference key="2">
    <citation type="journal article" date="2004" name="Genes Chromosomes Cancer">
        <title>Characterization of the dual-specificity phosphatase PYST2 and its transcripts.</title>
        <authorList>
            <person name="Levy-Nissenbaum O."/>
            <person name="Sagi-Assif O."/>
            <person name="Witz I.P."/>
        </authorList>
    </citation>
    <scope>NUCLEOTIDE SEQUENCE [MRNA] (ISOFORMS 1 AND 2)</scope>
    <scope>ALTERNATIVE PROMOTER USAGE</scope>
    <source>
        <tissue>Monocyte</tissue>
    </source>
</reference>
<reference key="3">
    <citation type="journal article" date="2006" name="Nature">
        <title>The DNA sequence, annotation and analysis of human chromosome 3.</title>
        <authorList>
            <person name="Muzny D.M."/>
            <person name="Scherer S.E."/>
            <person name="Kaul R."/>
            <person name="Wang J."/>
            <person name="Yu J."/>
            <person name="Sudbrak R."/>
            <person name="Buhay C.J."/>
            <person name="Chen R."/>
            <person name="Cree A."/>
            <person name="Ding Y."/>
            <person name="Dugan-Rocha S."/>
            <person name="Gill R."/>
            <person name="Gunaratne P."/>
            <person name="Harris R.A."/>
            <person name="Hawes A.C."/>
            <person name="Hernandez J."/>
            <person name="Hodgson A.V."/>
            <person name="Hume J."/>
            <person name="Jackson A."/>
            <person name="Khan Z.M."/>
            <person name="Kovar-Smith C."/>
            <person name="Lewis L.R."/>
            <person name="Lozado R.J."/>
            <person name="Metzker M.L."/>
            <person name="Milosavljevic A."/>
            <person name="Miner G.R."/>
            <person name="Morgan M.B."/>
            <person name="Nazareth L.V."/>
            <person name="Scott G."/>
            <person name="Sodergren E."/>
            <person name="Song X.-Z."/>
            <person name="Steffen D."/>
            <person name="Wei S."/>
            <person name="Wheeler D.A."/>
            <person name="Wright M.W."/>
            <person name="Worley K.C."/>
            <person name="Yuan Y."/>
            <person name="Zhang Z."/>
            <person name="Adams C.Q."/>
            <person name="Ansari-Lari M.A."/>
            <person name="Ayele M."/>
            <person name="Brown M.J."/>
            <person name="Chen G."/>
            <person name="Chen Z."/>
            <person name="Clendenning J."/>
            <person name="Clerc-Blankenburg K.P."/>
            <person name="Chen R."/>
            <person name="Chen Z."/>
            <person name="Davis C."/>
            <person name="Delgado O."/>
            <person name="Dinh H.H."/>
            <person name="Dong W."/>
            <person name="Draper H."/>
            <person name="Ernst S."/>
            <person name="Fu G."/>
            <person name="Gonzalez-Garay M.L."/>
            <person name="Garcia D.K."/>
            <person name="Gillett W."/>
            <person name="Gu J."/>
            <person name="Hao B."/>
            <person name="Haugen E."/>
            <person name="Havlak P."/>
            <person name="He X."/>
            <person name="Hennig S."/>
            <person name="Hu S."/>
            <person name="Huang W."/>
            <person name="Jackson L.R."/>
            <person name="Jacob L.S."/>
            <person name="Kelly S.H."/>
            <person name="Kube M."/>
            <person name="Levy R."/>
            <person name="Li Z."/>
            <person name="Liu B."/>
            <person name="Liu J."/>
            <person name="Liu W."/>
            <person name="Lu J."/>
            <person name="Maheshwari M."/>
            <person name="Nguyen B.-V."/>
            <person name="Okwuonu G.O."/>
            <person name="Palmeiri A."/>
            <person name="Pasternak S."/>
            <person name="Perez L.M."/>
            <person name="Phelps K.A."/>
            <person name="Plopper F.J."/>
            <person name="Qiang B."/>
            <person name="Raymond C."/>
            <person name="Rodriguez R."/>
            <person name="Saenphimmachak C."/>
            <person name="Santibanez J."/>
            <person name="Shen H."/>
            <person name="Shen Y."/>
            <person name="Subramanian S."/>
            <person name="Tabor P.E."/>
            <person name="Verduzco D."/>
            <person name="Waldron L."/>
            <person name="Wang J."/>
            <person name="Wang J."/>
            <person name="Wang Q."/>
            <person name="Williams G.A."/>
            <person name="Wong G.K.-S."/>
            <person name="Yao Z."/>
            <person name="Zhang J."/>
            <person name="Zhang X."/>
            <person name="Zhao G."/>
            <person name="Zhou J."/>
            <person name="Zhou Y."/>
            <person name="Nelson D."/>
            <person name="Lehrach H."/>
            <person name="Reinhardt R."/>
            <person name="Naylor S.L."/>
            <person name="Yang H."/>
            <person name="Olson M."/>
            <person name="Weinstock G."/>
            <person name="Gibbs R.A."/>
        </authorList>
    </citation>
    <scope>NUCLEOTIDE SEQUENCE [LARGE SCALE GENOMIC DNA]</scope>
</reference>
<reference key="4">
    <citation type="submission" date="2003-04" db="EMBL/GenBank/DDBJ databases">
        <title>Full-length cDNA libraries and normalization.</title>
        <authorList>
            <person name="Li W.B."/>
            <person name="Gruber C."/>
            <person name="Jessee J."/>
            <person name="Polayes D."/>
        </authorList>
    </citation>
    <scope>NUCLEOTIDE SEQUENCE [LARGE SCALE MRNA] OF 1-235 (ISOFORM 1)</scope>
</reference>
<reference key="5">
    <citation type="journal article" date="2004" name="Genome Res.">
        <title>The status, quality, and expansion of the NIH full-length cDNA project: the Mammalian Gene Collection (MGC).</title>
        <authorList>
            <consortium name="The MGC Project Team"/>
        </authorList>
    </citation>
    <scope>NUCLEOTIDE SEQUENCE [LARGE SCALE MRNA] OF 83-419 (ISOFORM 1)</scope>
    <source>
        <tissue>Brain</tissue>
        <tissue>Lymph</tissue>
    </source>
</reference>
<reference key="6">
    <citation type="journal article" date="1996" name="EMBO J.">
        <title>Differential regulation of the MAP, SAP and RK/p38 kinases by Pyst1, a novel cytosolic dual-specificity phosphatase.</title>
        <authorList>
            <person name="Groom L.A."/>
            <person name="Sneddon A.A."/>
            <person name="Alessi D.R."/>
            <person name="Dowd S."/>
            <person name="Keyse S.M."/>
        </authorList>
    </citation>
    <scope>NUCLEOTIDE SEQUENCE [MRNA] OF 149-419 (ISOFORM 1)</scope>
    <scope>TISSUE SPECIFICITY</scope>
    <source>
        <tissue>Testis</tissue>
    </source>
</reference>
<reference key="7">
    <citation type="journal article" date="2003" name="Oncogene">
        <title>Dual-specificity phosphatase Pyst2-L is constitutively highly expressed in myeloid leukemia and other malignant cells.</title>
        <authorList>
            <person name="Levy-Nissenbaum O."/>
            <person name="Sagi-Assif O."/>
            <person name="Kapon D."/>
            <person name="Hantisteanu S."/>
            <person name="Burg T."/>
            <person name="Raanani P."/>
            <person name="Avigdor A."/>
            <person name="Ben-Bassat I."/>
            <person name="Witz I.P."/>
        </authorList>
    </citation>
    <scope>TISSUE SPECIFICITY</scope>
</reference>
<reference evidence="13" key="8">
    <citation type="journal article" date="2015" name="Acta Crystallogr. F">
        <title>Structure of human dual-specificity phosphatase 7, a potential cancer drug target.</title>
        <authorList>
            <person name="Lountos G.T."/>
            <person name="Austin B.P."/>
            <person name="Tropea J.E."/>
            <person name="Waugh D.S."/>
        </authorList>
    </citation>
    <scope>X-RAY CRYSTALLOGRAPHY (1.67 ANGSTROMS) OF 240-388 OF MUTANT SER-331 IN COMPLEX WITH PHOSPHATE</scope>
</reference>
<dbReference type="EC" id="3.1.3.16" evidence="8"/>
<dbReference type="EC" id="3.1.3.48" evidence="8"/>
<dbReference type="EMBL" id="AF508727">
    <property type="protein sequence ID" value="AAM77606.1"/>
    <property type="molecule type" value="mRNA"/>
</dbReference>
<dbReference type="EMBL" id="AF508728">
    <property type="status" value="NOT_ANNOTATED_CDS"/>
    <property type="molecule type" value="mRNA"/>
</dbReference>
<dbReference type="EMBL" id="AC115284">
    <property type="status" value="NOT_ANNOTATED_CDS"/>
    <property type="molecule type" value="Genomic_DNA"/>
</dbReference>
<dbReference type="EMBL" id="AL556300">
    <property type="status" value="NOT_ANNOTATED_CDS"/>
    <property type="molecule type" value="mRNA"/>
</dbReference>
<dbReference type="EMBL" id="BC019107">
    <property type="protein sequence ID" value="AAH19107.2"/>
    <property type="molecule type" value="mRNA"/>
</dbReference>
<dbReference type="EMBL" id="BC104880">
    <property type="protein sequence ID" value="AAI04881.1"/>
    <property type="molecule type" value="mRNA"/>
</dbReference>
<dbReference type="EMBL" id="BC104882">
    <property type="protein sequence ID" value="AAI04883.1"/>
    <property type="molecule type" value="mRNA"/>
</dbReference>
<dbReference type="EMBL" id="X93921">
    <property type="protein sequence ID" value="CAA63814.1"/>
    <property type="molecule type" value="mRNA"/>
</dbReference>
<dbReference type="CCDS" id="CCDS33766.2">
    <molecule id="Q16829-1"/>
</dbReference>
<dbReference type="RefSeq" id="NP_001938.2">
    <molecule id="Q16829-1"/>
    <property type="nucleotide sequence ID" value="NM_001947.4"/>
</dbReference>
<dbReference type="PDB" id="4Y2E">
    <property type="method" value="X-ray"/>
    <property type="resolution" value="1.67 A"/>
    <property type="chains" value="A/B/C/D=240-388"/>
</dbReference>
<dbReference type="PDBsum" id="4Y2E"/>
<dbReference type="SMR" id="Q16829"/>
<dbReference type="BioGRID" id="108182">
    <property type="interactions" value="68"/>
</dbReference>
<dbReference type="FunCoup" id="Q16829">
    <property type="interactions" value="2233"/>
</dbReference>
<dbReference type="IntAct" id="Q16829">
    <property type="interactions" value="19"/>
</dbReference>
<dbReference type="MINT" id="Q16829"/>
<dbReference type="STRING" id="9606.ENSP00000417183"/>
<dbReference type="DEPOD" id="DUSP7"/>
<dbReference type="iPTMnet" id="Q16829"/>
<dbReference type="PhosphoSitePlus" id="Q16829"/>
<dbReference type="BioMuta" id="DUSP7"/>
<dbReference type="DMDM" id="338817906"/>
<dbReference type="jPOST" id="Q16829"/>
<dbReference type="MassIVE" id="Q16829"/>
<dbReference type="PaxDb" id="9606-ENSP00000417183"/>
<dbReference type="PeptideAtlas" id="Q16829"/>
<dbReference type="ProteomicsDB" id="61091">
    <molecule id="Q16829-1"/>
</dbReference>
<dbReference type="ProteomicsDB" id="61092">
    <molecule id="Q16829-2"/>
</dbReference>
<dbReference type="TopDownProteomics" id="Q16829-2">
    <molecule id="Q16829-2"/>
</dbReference>
<dbReference type="Antibodypedia" id="31149">
    <property type="antibodies" value="179 antibodies from 27 providers"/>
</dbReference>
<dbReference type="DNASU" id="1849"/>
<dbReference type="Ensembl" id="ENST00000495880.2">
    <molecule id="Q16829-1"/>
    <property type="protein sequence ID" value="ENSP00000417183.1"/>
    <property type="gene ID" value="ENSG00000164086.10"/>
</dbReference>
<dbReference type="GeneID" id="1849"/>
<dbReference type="KEGG" id="hsa:1849"/>
<dbReference type="MANE-Select" id="ENST00000495880.2">
    <property type="protein sequence ID" value="ENSP00000417183.1"/>
    <property type="RefSeq nucleotide sequence ID" value="NM_001947.4"/>
    <property type="RefSeq protein sequence ID" value="NP_001938.2"/>
</dbReference>
<dbReference type="UCSC" id="uc003dct.4">
    <molecule id="Q16829-1"/>
    <property type="organism name" value="human"/>
</dbReference>
<dbReference type="AGR" id="HGNC:3073"/>
<dbReference type="CTD" id="1849"/>
<dbReference type="DisGeNET" id="1849"/>
<dbReference type="GeneCards" id="DUSP7"/>
<dbReference type="HGNC" id="HGNC:3073">
    <property type="gene designation" value="DUSP7"/>
</dbReference>
<dbReference type="HPA" id="ENSG00000164086">
    <property type="expression patterns" value="Tissue enhanced (esophagus, skin)"/>
</dbReference>
<dbReference type="MIM" id="602749">
    <property type="type" value="gene"/>
</dbReference>
<dbReference type="neXtProt" id="NX_Q16829"/>
<dbReference type="OpenTargets" id="ENSG00000164086"/>
<dbReference type="PharmGKB" id="PA27530"/>
<dbReference type="VEuPathDB" id="HostDB:ENSG00000164086"/>
<dbReference type="eggNOG" id="KOG1717">
    <property type="taxonomic scope" value="Eukaryota"/>
</dbReference>
<dbReference type="GeneTree" id="ENSGT00940000157262"/>
<dbReference type="HOGENOM" id="CLU_027074_0_0_1"/>
<dbReference type="InParanoid" id="Q16829"/>
<dbReference type="OMA" id="QQDNGAP"/>
<dbReference type="OrthoDB" id="165342at2759"/>
<dbReference type="PAN-GO" id="Q16829">
    <property type="GO annotations" value="5 GO annotations based on evolutionary models"/>
</dbReference>
<dbReference type="PhylomeDB" id="Q16829"/>
<dbReference type="TreeFam" id="TF105122"/>
<dbReference type="PathwayCommons" id="Q16829"/>
<dbReference type="Reactome" id="R-HSA-112409">
    <property type="pathway name" value="RAF-independent MAPK1/3 activation"/>
</dbReference>
<dbReference type="Reactome" id="R-HSA-202670">
    <property type="pathway name" value="ERKs are inactivated"/>
</dbReference>
<dbReference type="Reactome" id="R-HSA-5675221">
    <property type="pathway name" value="Negative regulation of MAPK pathway"/>
</dbReference>
<dbReference type="Reactome" id="R-HSA-9652817">
    <property type="pathway name" value="Signaling by MAPK mutants"/>
</dbReference>
<dbReference type="SignaLink" id="Q16829"/>
<dbReference type="SIGNOR" id="Q16829"/>
<dbReference type="BioGRID-ORCS" id="1849">
    <property type="hits" value="18 hits in 1176 CRISPR screens"/>
</dbReference>
<dbReference type="ChiTaRS" id="DUSP7">
    <property type="organism name" value="human"/>
</dbReference>
<dbReference type="EvolutionaryTrace" id="Q16829"/>
<dbReference type="GeneWiki" id="DUSP7"/>
<dbReference type="GenomeRNAi" id="1849"/>
<dbReference type="Pharos" id="Q16829">
    <property type="development level" value="Tbio"/>
</dbReference>
<dbReference type="PRO" id="PR:Q16829"/>
<dbReference type="Proteomes" id="UP000005640">
    <property type="component" value="Chromosome 3"/>
</dbReference>
<dbReference type="RNAct" id="Q16829">
    <property type="molecule type" value="protein"/>
</dbReference>
<dbReference type="Bgee" id="ENSG00000164086">
    <property type="expression patterns" value="Expressed in oocyte and 199 other cell types or tissues"/>
</dbReference>
<dbReference type="ExpressionAtlas" id="Q16829">
    <property type="expression patterns" value="baseline and differential"/>
</dbReference>
<dbReference type="GO" id="GO:0005737">
    <property type="term" value="C:cytoplasm"/>
    <property type="evidence" value="ECO:0000318"/>
    <property type="project" value="GO_Central"/>
</dbReference>
<dbReference type="GO" id="GO:0005829">
    <property type="term" value="C:cytosol"/>
    <property type="evidence" value="ECO:0000314"/>
    <property type="project" value="UniProtKB"/>
</dbReference>
<dbReference type="GO" id="GO:0005654">
    <property type="term" value="C:nucleoplasm"/>
    <property type="evidence" value="ECO:0000304"/>
    <property type="project" value="Reactome"/>
</dbReference>
<dbReference type="GO" id="GO:0033550">
    <property type="term" value="F:MAP kinase tyrosine phosphatase activity"/>
    <property type="evidence" value="ECO:0000318"/>
    <property type="project" value="GO_Central"/>
</dbReference>
<dbReference type="GO" id="GO:0017017">
    <property type="term" value="F:MAP kinase tyrosine/serine/threonine phosphatase activity"/>
    <property type="evidence" value="ECO:0000314"/>
    <property type="project" value="UniProtKB"/>
</dbReference>
<dbReference type="GO" id="GO:0004722">
    <property type="term" value="F:protein serine/threonine phosphatase activity"/>
    <property type="evidence" value="ECO:0007669"/>
    <property type="project" value="UniProtKB-EC"/>
</dbReference>
<dbReference type="GO" id="GO:0004725">
    <property type="term" value="F:protein tyrosine phosphatase activity"/>
    <property type="evidence" value="ECO:0000304"/>
    <property type="project" value="Reactome"/>
</dbReference>
<dbReference type="GO" id="GO:0008138">
    <property type="term" value="F:protein tyrosine/serine/threonine phosphatase activity"/>
    <property type="evidence" value="ECO:0000304"/>
    <property type="project" value="Reactome"/>
</dbReference>
<dbReference type="GO" id="GO:0008330">
    <property type="term" value="F:protein tyrosine/threonine phosphatase activity"/>
    <property type="evidence" value="ECO:0000318"/>
    <property type="project" value="GO_Central"/>
</dbReference>
<dbReference type="GO" id="GO:0070371">
    <property type="term" value="P:ERK1 and ERK2 cascade"/>
    <property type="evidence" value="ECO:0000304"/>
    <property type="project" value="Reactome"/>
</dbReference>
<dbReference type="GO" id="GO:0000165">
    <property type="term" value="P:MAPK cascade"/>
    <property type="evidence" value="ECO:0000304"/>
    <property type="project" value="Reactome"/>
</dbReference>
<dbReference type="GO" id="GO:0070373">
    <property type="term" value="P:negative regulation of ERK1 and ERK2 cascade"/>
    <property type="evidence" value="ECO:0000318"/>
    <property type="project" value="GO_Central"/>
</dbReference>
<dbReference type="GO" id="GO:0043407">
    <property type="term" value="P:negative regulation of MAP kinase activity"/>
    <property type="evidence" value="ECO:0000314"/>
    <property type="project" value="UniProtKB"/>
</dbReference>
<dbReference type="GO" id="GO:0035335">
    <property type="term" value="P:peptidyl-tyrosine dephosphorylation"/>
    <property type="evidence" value="ECO:0000314"/>
    <property type="project" value="UniProtKB"/>
</dbReference>
<dbReference type="GO" id="GO:0007165">
    <property type="term" value="P:signal transduction"/>
    <property type="evidence" value="ECO:0000318"/>
    <property type="project" value="GO_Central"/>
</dbReference>
<dbReference type="CDD" id="cd14643">
    <property type="entry name" value="DSP_DUSP7"/>
    <property type="match status" value="1"/>
</dbReference>
<dbReference type="CDD" id="cd01446">
    <property type="entry name" value="DSP_MapKP"/>
    <property type="match status" value="1"/>
</dbReference>
<dbReference type="FunFam" id="3.90.190.10:FF:000011">
    <property type="entry name" value="Dual specificity phosphatase 6"/>
    <property type="match status" value="1"/>
</dbReference>
<dbReference type="FunFam" id="3.40.250.10:FF:000011">
    <property type="entry name" value="Dual specificity phosphatase 7"/>
    <property type="match status" value="1"/>
</dbReference>
<dbReference type="Gene3D" id="3.90.190.10">
    <property type="entry name" value="Protein tyrosine phosphatase superfamily"/>
    <property type="match status" value="1"/>
</dbReference>
<dbReference type="Gene3D" id="3.40.250.10">
    <property type="entry name" value="Rhodanese-like domain"/>
    <property type="match status" value="1"/>
</dbReference>
<dbReference type="InterPro" id="IPR000340">
    <property type="entry name" value="Dual-sp_phosphatase_cat-dom"/>
</dbReference>
<dbReference type="InterPro" id="IPR008343">
    <property type="entry name" value="MKP"/>
</dbReference>
<dbReference type="InterPro" id="IPR029021">
    <property type="entry name" value="Prot-tyrosine_phosphatase-like"/>
</dbReference>
<dbReference type="InterPro" id="IPR001763">
    <property type="entry name" value="Rhodanese-like_dom"/>
</dbReference>
<dbReference type="InterPro" id="IPR036873">
    <property type="entry name" value="Rhodanese-like_dom_sf"/>
</dbReference>
<dbReference type="InterPro" id="IPR000387">
    <property type="entry name" value="Tyr_Pase_dom"/>
</dbReference>
<dbReference type="InterPro" id="IPR020422">
    <property type="entry name" value="TYR_PHOSPHATASE_DUAL_dom"/>
</dbReference>
<dbReference type="PANTHER" id="PTHR10159">
    <property type="entry name" value="DUAL SPECIFICITY PROTEIN PHOSPHATASE"/>
    <property type="match status" value="1"/>
</dbReference>
<dbReference type="PANTHER" id="PTHR10159:SF305">
    <property type="entry name" value="DUAL SPECIFICITY PROTEIN PHOSPHATASE 7"/>
    <property type="match status" value="1"/>
</dbReference>
<dbReference type="Pfam" id="PF00782">
    <property type="entry name" value="DSPc"/>
    <property type="match status" value="1"/>
</dbReference>
<dbReference type="Pfam" id="PF00581">
    <property type="entry name" value="Rhodanese"/>
    <property type="match status" value="1"/>
</dbReference>
<dbReference type="PIRSF" id="PIRSF000939">
    <property type="entry name" value="MAPK_Ptase"/>
    <property type="match status" value="1"/>
</dbReference>
<dbReference type="PRINTS" id="PR01764">
    <property type="entry name" value="MAPKPHPHTASE"/>
</dbReference>
<dbReference type="SMART" id="SM00195">
    <property type="entry name" value="DSPc"/>
    <property type="match status" value="1"/>
</dbReference>
<dbReference type="SMART" id="SM00450">
    <property type="entry name" value="RHOD"/>
    <property type="match status" value="1"/>
</dbReference>
<dbReference type="SUPFAM" id="SSF52799">
    <property type="entry name" value="(Phosphotyrosine protein) phosphatases II"/>
    <property type="match status" value="1"/>
</dbReference>
<dbReference type="SUPFAM" id="SSF52821">
    <property type="entry name" value="Rhodanese/Cell cycle control phosphatase"/>
    <property type="match status" value="1"/>
</dbReference>
<dbReference type="PROSITE" id="PS50206">
    <property type="entry name" value="RHODANESE_3"/>
    <property type="match status" value="1"/>
</dbReference>
<dbReference type="PROSITE" id="PS50056">
    <property type="entry name" value="TYR_PHOSPHATASE_2"/>
    <property type="match status" value="1"/>
</dbReference>
<dbReference type="PROSITE" id="PS50054">
    <property type="entry name" value="TYR_PHOSPHATASE_DUAL"/>
    <property type="match status" value="1"/>
</dbReference>